<dbReference type="EC" id="4.3.3.7" evidence="1"/>
<dbReference type="EMBL" id="CP000538">
    <property type="protein sequence ID" value="EAQ72463.1"/>
    <property type="molecule type" value="Genomic_DNA"/>
</dbReference>
<dbReference type="RefSeq" id="WP_002867956.1">
    <property type="nucleotide sequence ID" value="NC_008787.1"/>
</dbReference>
<dbReference type="SMR" id="A1VZF4"/>
<dbReference type="KEGG" id="cjj:CJJ81176_0827"/>
<dbReference type="eggNOG" id="COG0329">
    <property type="taxonomic scope" value="Bacteria"/>
</dbReference>
<dbReference type="HOGENOM" id="CLU_049343_7_0_7"/>
<dbReference type="UniPathway" id="UPA00034">
    <property type="reaction ID" value="UER00017"/>
</dbReference>
<dbReference type="Proteomes" id="UP000000646">
    <property type="component" value="Chromosome"/>
</dbReference>
<dbReference type="GO" id="GO:0005829">
    <property type="term" value="C:cytosol"/>
    <property type="evidence" value="ECO:0007669"/>
    <property type="project" value="TreeGrafter"/>
</dbReference>
<dbReference type="GO" id="GO:0008840">
    <property type="term" value="F:4-hydroxy-tetrahydrodipicolinate synthase activity"/>
    <property type="evidence" value="ECO:0007669"/>
    <property type="project" value="UniProtKB-UniRule"/>
</dbReference>
<dbReference type="GO" id="GO:0019877">
    <property type="term" value="P:diaminopimelate biosynthetic process"/>
    <property type="evidence" value="ECO:0007669"/>
    <property type="project" value="UniProtKB-UniRule"/>
</dbReference>
<dbReference type="GO" id="GO:0009089">
    <property type="term" value="P:lysine biosynthetic process via diaminopimelate"/>
    <property type="evidence" value="ECO:0007669"/>
    <property type="project" value="UniProtKB-UniRule"/>
</dbReference>
<dbReference type="CDD" id="cd00950">
    <property type="entry name" value="DHDPS"/>
    <property type="match status" value="1"/>
</dbReference>
<dbReference type="Gene3D" id="3.20.20.70">
    <property type="entry name" value="Aldolase class I"/>
    <property type="match status" value="1"/>
</dbReference>
<dbReference type="HAMAP" id="MF_00418">
    <property type="entry name" value="DapA"/>
    <property type="match status" value="1"/>
</dbReference>
<dbReference type="InterPro" id="IPR013785">
    <property type="entry name" value="Aldolase_TIM"/>
</dbReference>
<dbReference type="InterPro" id="IPR005263">
    <property type="entry name" value="DapA"/>
</dbReference>
<dbReference type="InterPro" id="IPR002220">
    <property type="entry name" value="DapA-like"/>
</dbReference>
<dbReference type="InterPro" id="IPR020625">
    <property type="entry name" value="Schiff_base-form_aldolases_AS"/>
</dbReference>
<dbReference type="InterPro" id="IPR020624">
    <property type="entry name" value="Schiff_base-form_aldolases_CS"/>
</dbReference>
<dbReference type="NCBIfam" id="TIGR00674">
    <property type="entry name" value="dapA"/>
    <property type="match status" value="1"/>
</dbReference>
<dbReference type="PANTHER" id="PTHR12128:SF66">
    <property type="entry name" value="4-HYDROXY-2-OXOGLUTARATE ALDOLASE, MITOCHONDRIAL"/>
    <property type="match status" value="1"/>
</dbReference>
<dbReference type="PANTHER" id="PTHR12128">
    <property type="entry name" value="DIHYDRODIPICOLINATE SYNTHASE"/>
    <property type="match status" value="1"/>
</dbReference>
<dbReference type="Pfam" id="PF00701">
    <property type="entry name" value="DHDPS"/>
    <property type="match status" value="1"/>
</dbReference>
<dbReference type="PIRSF" id="PIRSF001365">
    <property type="entry name" value="DHDPS"/>
    <property type="match status" value="1"/>
</dbReference>
<dbReference type="PRINTS" id="PR00146">
    <property type="entry name" value="DHPICSNTHASE"/>
</dbReference>
<dbReference type="SMART" id="SM01130">
    <property type="entry name" value="DHDPS"/>
    <property type="match status" value="1"/>
</dbReference>
<dbReference type="SUPFAM" id="SSF51569">
    <property type="entry name" value="Aldolase"/>
    <property type="match status" value="1"/>
</dbReference>
<dbReference type="PROSITE" id="PS00665">
    <property type="entry name" value="DHDPS_1"/>
    <property type="match status" value="1"/>
</dbReference>
<dbReference type="PROSITE" id="PS00666">
    <property type="entry name" value="DHDPS_2"/>
    <property type="match status" value="1"/>
</dbReference>
<feature type="chain" id="PRO_1000050172" description="4-hydroxy-tetrahydrodipicolinate synthase">
    <location>
        <begin position="1"/>
        <end position="298"/>
    </location>
</feature>
<feature type="active site" description="Proton donor/acceptor" evidence="1">
    <location>
        <position position="137"/>
    </location>
</feature>
<feature type="active site" description="Schiff-base intermediate with substrate" evidence="1">
    <location>
        <position position="166"/>
    </location>
</feature>
<feature type="binding site" evidence="1">
    <location>
        <position position="48"/>
    </location>
    <ligand>
        <name>pyruvate</name>
        <dbReference type="ChEBI" id="CHEBI:15361"/>
    </ligand>
</feature>
<feature type="binding site" evidence="1">
    <location>
        <position position="207"/>
    </location>
    <ligand>
        <name>pyruvate</name>
        <dbReference type="ChEBI" id="CHEBI:15361"/>
    </ligand>
</feature>
<feature type="site" description="Part of a proton relay during catalysis" evidence="1">
    <location>
        <position position="47"/>
    </location>
</feature>
<feature type="site" description="Part of a proton relay during catalysis" evidence="1">
    <location>
        <position position="111"/>
    </location>
</feature>
<accession>A1VZF4</accession>
<protein>
    <recommendedName>
        <fullName evidence="1">4-hydroxy-tetrahydrodipicolinate synthase</fullName>
        <shortName evidence="1">HTPA synthase</shortName>
        <ecNumber evidence="1">4.3.3.7</ecNumber>
    </recommendedName>
</protein>
<reference key="1">
    <citation type="submission" date="2006-12" db="EMBL/GenBank/DDBJ databases">
        <authorList>
            <person name="Fouts D.E."/>
            <person name="Nelson K.E."/>
            <person name="Sebastian Y."/>
        </authorList>
    </citation>
    <scope>NUCLEOTIDE SEQUENCE [LARGE SCALE GENOMIC DNA]</scope>
    <source>
        <strain>81-176</strain>
    </source>
</reference>
<gene>
    <name evidence="1" type="primary">dapA</name>
    <name type="ordered locus">CJJ81176_0827</name>
</gene>
<sequence>MDKNIIIGAMTALITPFKNGKVDEQSYARLIKRQIENGIDAVVPVGTTGESATLTHEEHRTCIEIAVETCKGTKVKVLAGAGSNATHEAVGLAKFAKEHGADGILSVVPYYNKPTQQGLYEHYKAIAQSVDIPVLLYNVPGRTGCEISTDTIIKLFRDCENIYGVKEASGNIDKCVDLLAHEPRMMLISGEDAINYPILSNGGKGVISVTSNLLPDMISALTHFALDENYKEAKKINDELYNINKILFCESNPIPIKTAMYLAGLIESLEFRLPLCSPSKENFAKIEEVMKKYKIKGF</sequence>
<name>DAPA_CAMJJ</name>
<evidence type="ECO:0000255" key="1">
    <source>
        <dbReference type="HAMAP-Rule" id="MF_00418"/>
    </source>
</evidence>
<evidence type="ECO:0000305" key="2"/>
<keyword id="KW-0028">Amino-acid biosynthesis</keyword>
<keyword id="KW-0963">Cytoplasm</keyword>
<keyword id="KW-0220">Diaminopimelate biosynthesis</keyword>
<keyword id="KW-0456">Lyase</keyword>
<keyword id="KW-0457">Lysine biosynthesis</keyword>
<keyword id="KW-0704">Schiff base</keyword>
<comment type="function">
    <text evidence="1">Catalyzes the condensation of (S)-aspartate-beta-semialdehyde [(S)-ASA] and pyruvate to 4-hydroxy-tetrahydrodipicolinate (HTPA).</text>
</comment>
<comment type="catalytic activity">
    <reaction evidence="1">
        <text>L-aspartate 4-semialdehyde + pyruvate = (2S,4S)-4-hydroxy-2,3,4,5-tetrahydrodipicolinate + H2O + H(+)</text>
        <dbReference type="Rhea" id="RHEA:34171"/>
        <dbReference type="ChEBI" id="CHEBI:15361"/>
        <dbReference type="ChEBI" id="CHEBI:15377"/>
        <dbReference type="ChEBI" id="CHEBI:15378"/>
        <dbReference type="ChEBI" id="CHEBI:67139"/>
        <dbReference type="ChEBI" id="CHEBI:537519"/>
        <dbReference type="EC" id="4.3.3.7"/>
    </reaction>
</comment>
<comment type="pathway">
    <text evidence="1">Amino-acid biosynthesis; L-lysine biosynthesis via DAP pathway; (S)-tetrahydrodipicolinate from L-aspartate: step 3/4.</text>
</comment>
<comment type="subunit">
    <text evidence="1">Homotetramer; dimer of dimers.</text>
</comment>
<comment type="subcellular location">
    <subcellularLocation>
        <location evidence="1">Cytoplasm</location>
    </subcellularLocation>
</comment>
<comment type="similarity">
    <text evidence="1">Belongs to the DapA family.</text>
</comment>
<comment type="caution">
    <text evidence="2">Was originally thought to be a dihydrodipicolinate synthase (DHDPS), catalyzing the condensation of (S)-aspartate-beta-semialdehyde [(S)-ASA] and pyruvate to dihydrodipicolinate (DHDP). However, it was shown in E.coli that the product of the enzymatic reaction is not dihydrodipicolinate but in fact (4S)-4-hydroxy-2,3,4,5-tetrahydro-(2S)-dipicolinic acid (HTPA), and that the consecutive dehydration reaction leading to DHDP is not spontaneous but catalyzed by DapB.</text>
</comment>
<proteinExistence type="inferred from homology"/>
<organism>
    <name type="scientific">Campylobacter jejuni subsp. jejuni serotype O:23/36 (strain 81-176)</name>
    <dbReference type="NCBI Taxonomy" id="354242"/>
    <lineage>
        <taxon>Bacteria</taxon>
        <taxon>Pseudomonadati</taxon>
        <taxon>Campylobacterota</taxon>
        <taxon>Epsilonproteobacteria</taxon>
        <taxon>Campylobacterales</taxon>
        <taxon>Campylobacteraceae</taxon>
        <taxon>Campylobacter</taxon>
    </lineage>
</organism>